<proteinExistence type="inferred from homology"/>
<dbReference type="EMBL" id="CP000410">
    <property type="protein sequence ID" value="ABJ55234.1"/>
    <property type="molecule type" value="Genomic_DNA"/>
</dbReference>
<dbReference type="RefSeq" id="WP_000772918.1">
    <property type="nucleotide sequence ID" value="NZ_JAMLJR010000002.1"/>
</dbReference>
<dbReference type="SMR" id="Q04MM8"/>
<dbReference type="PaxDb" id="373153-SPD_0201"/>
<dbReference type="GeneID" id="93738965"/>
<dbReference type="KEGG" id="spd:SPD_0201"/>
<dbReference type="eggNOG" id="COG0255">
    <property type="taxonomic scope" value="Bacteria"/>
</dbReference>
<dbReference type="HOGENOM" id="CLU_158491_5_2_9"/>
<dbReference type="BioCyc" id="SPNE373153:G1G6V-224-MONOMER"/>
<dbReference type="Proteomes" id="UP000001452">
    <property type="component" value="Chromosome"/>
</dbReference>
<dbReference type="GO" id="GO:0022625">
    <property type="term" value="C:cytosolic large ribosomal subunit"/>
    <property type="evidence" value="ECO:0007669"/>
    <property type="project" value="TreeGrafter"/>
</dbReference>
<dbReference type="GO" id="GO:0003735">
    <property type="term" value="F:structural constituent of ribosome"/>
    <property type="evidence" value="ECO:0007669"/>
    <property type="project" value="InterPro"/>
</dbReference>
<dbReference type="GO" id="GO:0006412">
    <property type="term" value="P:translation"/>
    <property type="evidence" value="ECO:0007669"/>
    <property type="project" value="UniProtKB-UniRule"/>
</dbReference>
<dbReference type="CDD" id="cd00427">
    <property type="entry name" value="Ribosomal_L29_HIP"/>
    <property type="match status" value="1"/>
</dbReference>
<dbReference type="FunFam" id="1.10.287.310:FF:000001">
    <property type="entry name" value="50S ribosomal protein L29"/>
    <property type="match status" value="1"/>
</dbReference>
<dbReference type="Gene3D" id="1.10.287.310">
    <property type="match status" value="1"/>
</dbReference>
<dbReference type="HAMAP" id="MF_00374">
    <property type="entry name" value="Ribosomal_uL29"/>
    <property type="match status" value="1"/>
</dbReference>
<dbReference type="InterPro" id="IPR050063">
    <property type="entry name" value="Ribosomal_protein_uL29"/>
</dbReference>
<dbReference type="InterPro" id="IPR001854">
    <property type="entry name" value="Ribosomal_uL29"/>
</dbReference>
<dbReference type="InterPro" id="IPR018254">
    <property type="entry name" value="Ribosomal_uL29_CS"/>
</dbReference>
<dbReference type="InterPro" id="IPR036049">
    <property type="entry name" value="Ribosomal_uL29_sf"/>
</dbReference>
<dbReference type="NCBIfam" id="TIGR00012">
    <property type="entry name" value="L29"/>
    <property type="match status" value="1"/>
</dbReference>
<dbReference type="PANTHER" id="PTHR10916">
    <property type="entry name" value="60S RIBOSOMAL PROTEIN L35/50S RIBOSOMAL PROTEIN L29"/>
    <property type="match status" value="1"/>
</dbReference>
<dbReference type="PANTHER" id="PTHR10916:SF0">
    <property type="entry name" value="LARGE RIBOSOMAL SUBUNIT PROTEIN UL29C"/>
    <property type="match status" value="1"/>
</dbReference>
<dbReference type="Pfam" id="PF00831">
    <property type="entry name" value="Ribosomal_L29"/>
    <property type="match status" value="1"/>
</dbReference>
<dbReference type="SUPFAM" id="SSF46561">
    <property type="entry name" value="Ribosomal protein L29 (L29p)"/>
    <property type="match status" value="1"/>
</dbReference>
<dbReference type="PROSITE" id="PS00579">
    <property type="entry name" value="RIBOSOMAL_L29"/>
    <property type="match status" value="1"/>
</dbReference>
<evidence type="ECO:0000255" key="1">
    <source>
        <dbReference type="HAMAP-Rule" id="MF_00374"/>
    </source>
</evidence>
<evidence type="ECO:0000305" key="2"/>
<reference key="1">
    <citation type="journal article" date="2007" name="J. Bacteriol.">
        <title>Genome sequence of Avery's virulent serotype 2 strain D39 of Streptococcus pneumoniae and comparison with that of unencapsulated laboratory strain R6.</title>
        <authorList>
            <person name="Lanie J.A."/>
            <person name="Ng W.-L."/>
            <person name="Kazmierczak K.M."/>
            <person name="Andrzejewski T.M."/>
            <person name="Davidsen T.M."/>
            <person name="Wayne K.J."/>
            <person name="Tettelin H."/>
            <person name="Glass J.I."/>
            <person name="Winkler M.E."/>
        </authorList>
    </citation>
    <scope>NUCLEOTIDE SEQUENCE [LARGE SCALE GENOMIC DNA]</scope>
    <source>
        <strain>D39 / NCTC 7466</strain>
    </source>
</reference>
<comment type="similarity">
    <text evidence="1">Belongs to the universal ribosomal protein uL29 family.</text>
</comment>
<sequence>MKLNEVKEFVKELRGLSQEELAKRENELKKELFELRFQAATGQLEQTARLKEVKKQIARIKTVQSEAK</sequence>
<name>RL29_STRP2</name>
<keyword id="KW-1185">Reference proteome</keyword>
<keyword id="KW-0687">Ribonucleoprotein</keyword>
<keyword id="KW-0689">Ribosomal protein</keyword>
<gene>
    <name evidence="1" type="primary">rpmC</name>
    <name type="ordered locus">SPD_0201</name>
</gene>
<protein>
    <recommendedName>
        <fullName evidence="1">Large ribosomal subunit protein uL29</fullName>
    </recommendedName>
    <alternativeName>
        <fullName evidence="2">50S ribosomal protein L29</fullName>
    </alternativeName>
</protein>
<feature type="chain" id="PRO_1000007623" description="Large ribosomal subunit protein uL29">
    <location>
        <begin position="1"/>
        <end position="68"/>
    </location>
</feature>
<organism>
    <name type="scientific">Streptococcus pneumoniae serotype 2 (strain D39 / NCTC 7466)</name>
    <dbReference type="NCBI Taxonomy" id="373153"/>
    <lineage>
        <taxon>Bacteria</taxon>
        <taxon>Bacillati</taxon>
        <taxon>Bacillota</taxon>
        <taxon>Bacilli</taxon>
        <taxon>Lactobacillales</taxon>
        <taxon>Streptococcaceae</taxon>
        <taxon>Streptococcus</taxon>
    </lineage>
</organism>
<accession>Q04MM8</accession>